<accession>Q5F2C3</accession>
<accession>Q3KNB2</accession>
<feature type="chain" id="PRO_0000432391" description="Meiosis-specific kinetochore protein">
    <location>
        <begin position="1"/>
        <end position="434"/>
    </location>
</feature>
<feature type="region of interest" description="Disordered" evidence="1">
    <location>
        <begin position="1"/>
        <end position="102"/>
    </location>
</feature>
<feature type="region of interest" description="Disordered" evidence="1">
    <location>
        <begin position="249"/>
        <end position="289"/>
    </location>
</feature>
<feature type="region of interest" description="Required for localization to kinetochores" evidence="5">
    <location>
        <begin position="391"/>
        <end position="394"/>
    </location>
</feature>
<feature type="region of interest" description="Disordered" evidence="1">
    <location>
        <begin position="404"/>
        <end position="424"/>
    </location>
</feature>
<feature type="short sequence motif" description="POLO box domain (PBD)-binding" evidence="5">
    <location>
        <begin position="334"/>
        <end position="336"/>
    </location>
</feature>
<feature type="compositionally biased region" description="Basic and acidic residues" evidence="1">
    <location>
        <begin position="46"/>
        <end position="62"/>
    </location>
</feature>
<feature type="compositionally biased region" description="Polar residues" evidence="1">
    <location>
        <begin position="64"/>
        <end position="76"/>
    </location>
</feature>
<feature type="splice variant" id="VSP_057509" description="In isoform 2.">
    <location>
        <begin position="1"/>
        <end position="108"/>
    </location>
</feature>
<feature type="sequence conflict" description="In Ref. 3; AAI07369." evidence="4" ref="3">
    <original>A</original>
    <variation>S</variation>
    <location>
        <position position="303"/>
    </location>
</feature>
<keyword id="KW-0025">Alternative splicing</keyword>
<keyword id="KW-0137">Centromere</keyword>
<keyword id="KW-0158">Chromosome</keyword>
<keyword id="KW-0159">Chromosome partition</keyword>
<keyword id="KW-0995">Kinetochore</keyword>
<keyword id="KW-0469">Meiosis</keyword>
<keyword id="KW-1185">Reference proteome</keyword>
<comment type="function">
    <text evidence="2">Key regulator of kinetochore function during meiosis I: required both for mono-orientation of kinetochores on sister chromosomes and protection of centromeric cohesin from separase-mediated cleavage. Acts by facilitating kinetochore mono-orientation during meiosis I, when kinetochores on sister chromosomes face the same direction and are thus captured and pulled by spindle fibers from the same pole. Also required to prevent cleavage of cohesin at centromeres during meiosis I, possibly by acting as a regulator of the shugoshin-dependent protection pathway. Acts in collaboration with PLK1: required for PLK1 enrichment to kinetochores. Not required during meiosis II or mitosis.</text>
</comment>
<comment type="subunit">
    <text evidence="2">Interacts with CENPC. Interacts with PLK1; required for recruitment of PLK1 at kinetochores.</text>
</comment>
<comment type="interaction">
    <interactant intactId="EBI-20739301">
        <id>Q5F2C3</id>
    </interactant>
    <interactant intactId="EBI-1186252">
        <id>P49452</id>
        <label>Cenpc</label>
    </interactant>
    <organismsDiffer>false</organismsDiffer>
    <experiments>5</experiments>
</comment>
<comment type="interaction">
    <interactant intactId="EBI-20739301">
        <id>Q5F2C3</id>
    </interactant>
    <interactant intactId="EBI-2552999">
        <id>Q07832</id>
        <label>Plk1</label>
    </interactant>
    <organismsDiffer>false</organismsDiffer>
    <experiments>4</experiments>
</comment>
<comment type="subcellular location">
    <subcellularLocation>
        <location evidence="2">Chromosome</location>
        <location evidence="2">Centromere</location>
    </subcellularLocation>
    <subcellularLocation>
        <location evidence="2">Chromosome</location>
        <location evidence="2">Centromere</location>
        <location evidence="2">Kinetochore</location>
    </subcellularLocation>
    <text evidence="2">Localizes at kinetochores in meiosis I but undetectable in meiosis II.</text>
</comment>
<comment type="alternative products">
    <event type="alternative splicing"/>
    <isoform>
        <id>Q5F2C3-1</id>
        <name>1</name>
        <sequence type="displayed"/>
    </isoform>
    <isoform>
        <id>Q5F2C3-2</id>
        <name>2</name>
        <sequence type="described" ref="VSP_057509"/>
    </isoform>
</comment>
<comment type="tissue specificity">
    <text evidence="2">Germ cell-specific. Expressed in both testis and ovary. Not expressed in other tissues.</text>
</comment>
<comment type="developmental stage">
    <text evidence="2">Appears at centromeres during the pachytene stage, when homologous chromosomes are synapsed. Peaks during diplotene stage, persists with gradual reduction until metaphase I, and disappears in anaphase I. Does not reappear on chromatin in meiosis II.</text>
</comment>
<comment type="disruption phenotype">
    <text evidence="2">Infertility due to defects in meiosis. Mice develop normally and show no visible phenotype but are completely infertile (both males and females) due to defects in meiotic chromosome segregation during meiosis I. Monooriented kinetochores split prematurely and sister chromosomes separate entirely before anaphase of meiosis II.</text>
</comment>
<name>MEIKN_MOUSE</name>
<gene>
    <name evidence="3" type="primary">Meikin</name>
</gene>
<proteinExistence type="evidence at protein level"/>
<sequence length="434" mass="47423">MDKIWHMGPRGDYTRKKRAGERLNLTPKPDLALPGRTEALPGLKGKGKEQGLRKITEKKELSRLTGSSSQRPSLLSVTGGEHLQENSPGQETPEEKTPPCETVTDTFEMDSLLSSTELVSGPAEQDDFSSCLPSCSNAELHTESTDERGSSFPSPELFRGSDCLDWEHPKLEDYMFYKNSTLLDTSKAVVIEKAPQFANLSAVLSSSSKNYEKRHRKIGMTLAAQHLSPEPKYASNLASVVDNAASEVVFAEKTGPPTTEKTQKKPENESEDSGPLVQTKLSSGHPDNKALCSPLSSALESTAVRYTLLPQPLEPVLKKGCILPDKQSKALLTSTPSSDIAEFVIDLSPVQNVSFEELFPNVSNYVNSSEVVPVSSLQESSSNEFSPNTSEICCIIRSSPGTRQMRRKDPAVKNRCSPPKDVPLDIIMKTNGRT</sequence>
<dbReference type="EMBL" id="AB987828">
    <property type="protein sequence ID" value="BAP91161.1"/>
    <property type="molecule type" value="mRNA"/>
</dbReference>
<dbReference type="EMBL" id="AL596127">
    <property type="status" value="NOT_ANNOTATED_CDS"/>
    <property type="molecule type" value="Genomic_DNA"/>
</dbReference>
<dbReference type="EMBL" id="BC107368">
    <property type="protein sequence ID" value="AAI07369.1"/>
    <property type="molecule type" value="mRNA"/>
</dbReference>
<dbReference type="CCDS" id="CCDS48798.1">
    <molecule id="Q5F2C3-1"/>
</dbReference>
<dbReference type="RefSeq" id="NP_083381.1">
    <molecule id="Q5F2C3-1"/>
    <property type="nucleotide sequence ID" value="NM_029105.3"/>
</dbReference>
<dbReference type="FunCoup" id="Q5F2C3">
    <property type="interactions" value="47"/>
</dbReference>
<dbReference type="IntAct" id="Q5F2C3">
    <property type="interactions" value="56"/>
</dbReference>
<dbReference type="STRING" id="10090.ENSMUSP00000091745"/>
<dbReference type="iPTMnet" id="Q5F2C3"/>
<dbReference type="PhosphoSitePlus" id="Q5F2C3"/>
<dbReference type="SwissPalm" id="Q5F2C3"/>
<dbReference type="PaxDb" id="10090-ENSMUSP00000091745"/>
<dbReference type="ProteomicsDB" id="295872">
    <molecule id="Q5F2C3-1"/>
</dbReference>
<dbReference type="ProteomicsDB" id="295873">
    <molecule id="Q5F2C3-2"/>
</dbReference>
<dbReference type="Antibodypedia" id="77546">
    <property type="antibodies" value="21 antibodies from 4 providers"/>
</dbReference>
<dbReference type="Ensembl" id="ENSMUST00000094193.3">
    <molecule id="Q5F2C3-1"/>
    <property type="protein sequence ID" value="ENSMUSP00000091745.3"/>
    <property type="gene ID" value="ENSMUSG00000020332.8"/>
</dbReference>
<dbReference type="GeneID" id="74847"/>
<dbReference type="KEGG" id="mmu:74847"/>
<dbReference type="UCSC" id="uc007ixv.3">
    <molecule id="Q5F2C3-1"/>
    <property type="organism name" value="mouse"/>
</dbReference>
<dbReference type="AGR" id="MGI:1922097"/>
<dbReference type="CTD" id="728637"/>
<dbReference type="MGI" id="MGI:1922097">
    <property type="gene designation" value="Meikin"/>
</dbReference>
<dbReference type="VEuPathDB" id="HostDB:ENSMUSG00000020332"/>
<dbReference type="eggNOG" id="ENOG502S9GN">
    <property type="taxonomic scope" value="Eukaryota"/>
</dbReference>
<dbReference type="GeneTree" id="ENSGT00390000016270"/>
<dbReference type="HOGENOM" id="CLU_701239_0_0_1"/>
<dbReference type="InParanoid" id="Q5F2C3"/>
<dbReference type="OMA" id="NEFPANT"/>
<dbReference type="OrthoDB" id="8443315at2759"/>
<dbReference type="PhylomeDB" id="Q5F2C3"/>
<dbReference type="TreeFam" id="TF338954"/>
<dbReference type="BioGRID-ORCS" id="74847">
    <property type="hits" value="3 hits in 78 CRISPR screens"/>
</dbReference>
<dbReference type="PRO" id="PR:Q5F2C3"/>
<dbReference type="Proteomes" id="UP000000589">
    <property type="component" value="Chromosome 11"/>
</dbReference>
<dbReference type="RNAct" id="Q5F2C3">
    <property type="molecule type" value="protein"/>
</dbReference>
<dbReference type="Bgee" id="ENSMUSG00000020332">
    <property type="expression patterns" value="Expressed in animal zygote and 8 other cell types or tissues"/>
</dbReference>
<dbReference type="GO" id="GO:0000779">
    <property type="term" value="C:condensed chromosome, centromeric region"/>
    <property type="evidence" value="ECO:0000314"/>
    <property type="project" value="MGI"/>
</dbReference>
<dbReference type="GO" id="GO:0000776">
    <property type="term" value="C:kinetochore"/>
    <property type="evidence" value="ECO:0000314"/>
    <property type="project" value="UniProtKB"/>
</dbReference>
<dbReference type="GO" id="GO:0016321">
    <property type="term" value="P:female meiosis chromosome segregation"/>
    <property type="evidence" value="ECO:0000315"/>
    <property type="project" value="MGI"/>
</dbReference>
<dbReference type="GO" id="GO:0045143">
    <property type="term" value="P:homologous chromosome segregation"/>
    <property type="evidence" value="ECO:0000315"/>
    <property type="project" value="MGI"/>
</dbReference>
<dbReference type="GO" id="GO:0007060">
    <property type="term" value="P:male meiosis chromosome segregation"/>
    <property type="evidence" value="ECO:0000315"/>
    <property type="project" value="MGI"/>
</dbReference>
<dbReference type="GO" id="GO:0010789">
    <property type="term" value="P:meiotic sister chromatid cohesion involved in meiosis I"/>
    <property type="evidence" value="ECO:0000315"/>
    <property type="project" value="MGI"/>
</dbReference>
<dbReference type="GO" id="GO:0051754">
    <property type="term" value="P:meiotic sister chromatid cohesion, centromeric"/>
    <property type="evidence" value="ECO:0000315"/>
    <property type="project" value="MGI"/>
</dbReference>
<dbReference type="InterPro" id="IPR034545">
    <property type="entry name" value="Meikin"/>
</dbReference>
<dbReference type="PANTHER" id="PTHR38006">
    <property type="entry name" value="MEIOSIS-SPECIFIC KINETOCHORE PROTEIN"/>
    <property type="match status" value="1"/>
</dbReference>
<dbReference type="PANTHER" id="PTHR38006:SF1">
    <property type="entry name" value="MEIOSIS-SPECIFIC KINETOCHORE PROTEIN"/>
    <property type="match status" value="1"/>
</dbReference>
<protein>
    <recommendedName>
        <fullName evidence="3">Meiosis-specific kinetochore protein</fullName>
    </recommendedName>
</protein>
<evidence type="ECO:0000256" key="1">
    <source>
        <dbReference type="SAM" id="MobiDB-lite"/>
    </source>
</evidence>
<evidence type="ECO:0000269" key="2">
    <source>
    </source>
</evidence>
<evidence type="ECO:0000303" key="3">
    <source>
    </source>
</evidence>
<evidence type="ECO:0000305" key="4"/>
<evidence type="ECO:0000305" key="5">
    <source>
    </source>
</evidence>
<organism>
    <name type="scientific">Mus musculus</name>
    <name type="common">Mouse</name>
    <dbReference type="NCBI Taxonomy" id="10090"/>
    <lineage>
        <taxon>Eukaryota</taxon>
        <taxon>Metazoa</taxon>
        <taxon>Chordata</taxon>
        <taxon>Craniata</taxon>
        <taxon>Vertebrata</taxon>
        <taxon>Euteleostomi</taxon>
        <taxon>Mammalia</taxon>
        <taxon>Eutheria</taxon>
        <taxon>Euarchontoglires</taxon>
        <taxon>Glires</taxon>
        <taxon>Rodentia</taxon>
        <taxon>Myomorpha</taxon>
        <taxon>Muroidea</taxon>
        <taxon>Muridae</taxon>
        <taxon>Murinae</taxon>
        <taxon>Mus</taxon>
        <taxon>Mus</taxon>
    </lineage>
</organism>
<reference key="1">
    <citation type="journal article" date="2015" name="Nature">
        <title>Meikin is a conserved regulator of meiosis-I-specific kinetochore function.</title>
        <authorList>
            <person name="Kim J."/>
            <person name="Ishiguro K."/>
            <person name="Nambu A."/>
            <person name="Akiyoshi B."/>
            <person name="Yokobayashi S."/>
            <person name="Kagami A."/>
            <person name="Ishiguro T."/>
            <person name="Pendas A.M."/>
            <person name="Takeda N."/>
            <person name="Sakakibara Y."/>
            <person name="Kitajima T.S."/>
            <person name="Tanno Y."/>
            <person name="Sakuno T."/>
            <person name="Watanabe Y."/>
        </authorList>
    </citation>
    <scope>NUCLEOTIDE SEQUENCE [MRNA] (ISOFORM 1)</scope>
    <scope>FUNCTION</scope>
    <scope>SUBCELLULAR LOCATION</scope>
    <scope>TISSUE SPECIFICITY</scope>
    <scope>DEVELOPMENTAL STAGE</scope>
    <scope>DISRUPTION PHENOTYPE</scope>
    <scope>INTERACTION WITH PLK1 ANS CENPC</scope>
</reference>
<reference key="2">
    <citation type="journal article" date="2009" name="PLoS Biol.">
        <title>Lineage-specific biology revealed by a finished genome assembly of the mouse.</title>
        <authorList>
            <person name="Church D.M."/>
            <person name="Goodstadt L."/>
            <person name="Hillier L.W."/>
            <person name="Zody M.C."/>
            <person name="Goldstein S."/>
            <person name="She X."/>
            <person name="Bult C.J."/>
            <person name="Agarwala R."/>
            <person name="Cherry J.L."/>
            <person name="DiCuccio M."/>
            <person name="Hlavina W."/>
            <person name="Kapustin Y."/>
            <person name="Meric P."/>
            <person name="Maglott D."/>
            <person name="Birtle Z."/>
            <person name="Marques A.C."/>
            <person name="Graves T."/>
            <person name="Zhou S."/>
            <person name="Teague B."/>
            <person name="Potamousis K."/>
            <person name="Churas C."/>
            <person name="Place M."/>
            <person name="Herschleb J."/>
            <person name="Runnheim R."/>
            <person name="Forrest D."/>
            <person name="Amos-Landgraf J."/>
            <person name="Schwartz D.C."/>
            <person name="Cheng Z."/>
            <person name="Lindblad-Toh K."/>
            <person name="Eichler E.E."/>
            <person name="Ponting C.P."/>
        </authorList>
    </citation>
    <scope>NUCLEOTIDE SEQUENCE [LARGE SCALE GENOMIC DNA]</scope>
    <source>
        <strain>C57BL/6J</strain>
    </source>
</reference>
<reference key="3">
    <citation type="journal article" date="2004" name="Genome Res.">
        <title>The status, quality, and expansion of the NIH full-length cDNA project: the Mammalian Gene Collection (MGC).</title>
        <authorList>
            <consortium name="The MGC Project Team"/>
        </authorList>
    </citation>
    <scope>NUCLEOTIDE SEQUENCE [LARGE SCALE MRNA] (ISOFORM 2)</scope>
</reference>